<keyword id="KW-0002">3D-structure</keyword>
<keyword id="KW-0997">Cell inner membrane</keyword>
<keyword id="KW-1003">Cell membrane</keyword>
<keyword id="KW-0133">Cell shape</keyword>
<keyword id="KW-0961">Cell wall biogenesis/degradation</keyword>
<keyword id="KW-1015">Disulfide bond</keyword>
<keyword id="KW-0378">Hydrolase</keyword>
<keyword id="KW-0472">Membrane</keyword>
<keyword id="KW-0573">Peptidoglycan synthesis</keyword>
<keyword id="KW-1185">Reference proteome</keyword>
<keyword id="KW-0735">Signal-anchor</keyword>
<keyword id="KW-0812">Transmembrane</keyword>
<keyword id="KW-1133">Transmembrane helix</keyword>
<organism>
    <name type="scientific">Mycobacterium tuberculosis (strain ATCC 25618 / H37Rv)</name>
    <dbReference type="NCBI Taxonomy" id="83332"/>
    <lineage>
        <taxon>Bacteria</taxon>
        <taxon>Bacillati</taxon>
        <taxon>Actinomycetota</taxon>
        <taxon>Actinomycetes</taxon>
        <taxon>Mycobacteriales</taxon>
        <taxon>Mycobacteriaceae</taxon>
        <taxon>Mycobacterium</taxon>
        <taxon>Mycobacterium tuberculosis complex</taxon>
    </lineage>
</organism>
<protein>
    <recommendedName>
        <fullName evidence="7">Peptidoglycan D,D-transpeptidase PbpA</fullName>
        <ecNumber evidence="10">3.4.16.4</ecNumber>
    </recommendedName>
    <alternativeName>
        <fullName evidence="6">Penicillin-binding protein A</fullName>
        <shortName evidence="6">PBPA</shortName>
    </alternativeName>
</protein>
<evidence type="ECO:0000250" key="1">
    <source>
        <dbReference type="UniProtKB" id="P0AD65"/>
    </source>
</evidence>
<evidence type="ECO:0000255" key="2"/>
<evidence type="ECO:0000269" key="3">
    <source>
    </source>
</evidence>
<evidence type="ECO:0000269" key="4">
    <source>
    </source>
</evidence>
<evidence type="ECO:0000269" key="5">
    <source>
    </source>
</evidence>
<evidence type="ECO:0000303" key="6">
    <source>
    </source>
</evidence>
<evidence type="ECO:0000305" key="7"/>
<evidence type="ECO:0000305" key="8">
    <source>
    </source>
</evidence>
<evidence type="ECO:0000305" key="9">
    <source>
    </source>
</evidence>
<evidence type="ECO:0000305" key="10">
    <source>
    </source>
</evidence>
<evidence type="ECO:0007744" key="11">
    <source>
        <dbReference type="PDB" id="3LO7"/>
    </source>
</evidence>
<evidence type="ECO:0007744" key="12">
    <source>
        <dbReference type="PDB" id="3UN7"/>
    </source>
</evidence>
<evidence type="ECO:0007744" key="13">
    <source>
        <dbReference type="PDB" id="3UPN"/>
    </source>
</evidence>
<evidence type="ECO:0007744" key="14">
    <source>
        <dbReference type="PDB" id="3UPO"/>
    </source>
</evidence>
<evidence type="ECO:0007744" key="15">
    <source>
        <dbReference type="PDB" id="3UPP"/>
    </source>
</evidence>
<evidence type="ECO:0007829" key="16">
    <source>
        <dbReference type="PDB" id="3LO7"/>
    </source>
</evidence>
<evidence type="ECO:0007829" key="17">
    <source>
        <dbReference type="PDB" id="3UN7"/>
    </source>
</evidence>
<evidence type="ECO:0007829" key="18">
    <source>
        <dbReference type="PDB" id="3UPO"/>
    </source>
</evidence>
<gene>
    <name type="primary">pbpA</name>
    <name type="ordered locus">Rv0016c</name>
    <name type="ORF">MTCY10H4.16c</name>
</gene>
<sequence length="491" mass="51576">MNASLRRISVTVMALIVLLLLNATMTQVFTADGLRADPRNQRVLLDEYSRQRGQITAGGQLLAYSVATDGRFRFLRVYPNPEVYAPVTGFYSLRYSSTALERAEDPILNGSDRRLFGRRLADFFTGRDPRGGNVDTTINPRIQQAGWDAMQQGCYGPCKGAVVALEPSTGKILALVSSPSYDPNLLASHNPEVQAQAWQRLGDNPASPLTNRAISETYPPGSTFKVITTAAALAAGATETEQLTAAPTIPLPGSTAQLENYGGAPCGDEPTVSLREAFVKSCNTAFVQLGIRTGADALRSMARAFGLDSPPRPTPLQVAESTVGPIPDSAALGMTSIGQKDVALTPLANAEIAATIANGGITMRPYLVGSLKGPDLANISTTVGYQQRRAVSPQVAAKLTELMVGAEKVAQQKGAIPGVQIASKTGTAEHGTDPRHTPPHAWYIAFAPAQAPKVAVAVLVENGADRLSATGGALAAPIGRAVIEAALQGEP</sequence>
<feature type="chain" id="PRO_0000343832" description="Peptidoglycan D,D-transpeptidase PbpA">
    <location>
        <begin position="1"/>
        <end position="491"/>
    </location>
</feature>
<feature type="topological domain" description="Cytoplasmic" evidence="7">
    <location>
        <begin position="1"/>
        <end position="7"/>
    </location>
</feature>
<feature type="transmembrane region" description="Helical; Signal-anchor for type II membrane protein" evidence="2">
    <location>
        <begin position="8"/>
        <end position="28"/>
    </location>
</feature>
<feature type="topological domain" description="Periplasmic" evidence="7">
    <location>
        <begin position="29"/>
        <end position="491"/>
    </location>
</feature>
<feature type="region of interest" description="Transpeptidase">
    <location>
        <begin position="160"/>
        <end position="484"/>
    </location>
</feature>
<feature type="active site" description="Acyl-ester intermediate" evidence="1">
    <location>
        <position position="222"/>
    </location>
</feature>
<feature type="disulfide bond" evidence="3 4">
    <location>
        <begin position="266"/>
        <end position="282"/>
    </location>
</feature>
<feature type="mutagenesis site" description="Can rescue the deletion mutant." evidence="5">
    <original>S</original>
    <variation>A</variation>
    <location>
        <position position="281"/>
    </location>
</feature>
<feature type="mutagenesis site" description="Cannot rescue the deletion mutant." evidence="5">
    <original>K</original>
    <variation>G</variation>
    <location>
        <position position="424"/>
    </location>
</feature>
<feature type="helix" evidence="16">
    <location>
        <begin position="47"/>
        <end position="49"/>
    </location>
</feature>
<feature type="strand" evidence="17">
    <location>
        <begin position="55"/>
        <end position="57"/>
    </location>
</feature>
<feature type="strand" evidence="17">
    <location>
        <begin position="60"/>
        <end position="67"/>
    </location>
</feature>
<feature type="strand" evidence="17">
    <location>
        <begin position="69"/>
        <end position="72"/>
    </location>
</feature>
<feature type="strand" evidence="17">
    <location>
        <begin position="74"/>
        <end position="77"/>
    </location>
</feature>
<feature type="helix" evidence="17">
    <location>
        <begin position="81"/>
        <end position="88"/>
    </location>
</feature>
<feature type="turn" evidence="17">
    <location>
        <begin position="93"/>
        <end position="95"/>
    </location>
</feature>
<feature type="helix" evidence="17">
    <location>
        <begin position="99"/>
        <end position="103"/>
    </location>
</feature>
<feature type="helix" evidence="17">
    <location>
        <begin position="105"/>
        <end position="108"/>
    </location>
</feature>
<feature type="turn" evidence="17">
    <location>
        <begin position="113"/>
        <end position="115"/>
    </location>
</feature>
<feature type="helix" evidence="17">
    <location>
        <begin position="116"/>
        <end position="125"/>
    </location>
</feature>
<feature type="strand" evidence="17">
    <location>
        <begin position="133"/>
        <end position="136"/>
    </location>
</feature>
<feature type="helix" evidence="17">
    <location>
        <begin position="140"/>
        <end position="152"/>
    </location>
</feature>
<feature type="strand" evidence="17">
    <location>
        <begin position="160"/>
        <end position="165"/>
    </location>
</feature>
<feature type="turn" evidence="17">
    <location>
        <begin position="167"/>
        <end position="169"/>
    </location>
</feature>
<feature type="strand" evidence="17">
    <location>
        <begin position="171"/>
        <end position="179"/>
    </location>
</feature>
<feature type="helix" evidence="17">
    <location>
        <begin position="183"/>
        <end position="186"/>
    </location>
</feature>
<feature type="helix" evidence="17">
    <location>
        <begin position="191"/>
        <end position="203"/>
    </location>
</feature>
<feature type="turn" evidence="17">
    <location>
        <begin position="212"/>
        <end position="214"/>
    </location>
</feature>
<feature type="helix" evidence="17">
    <location>
        <begin position="221"/>
        <end position="224"/>
    </location>
</feature>
<feature type="helix" evidence="17">
    <location>
        <begin position="225"/>
        <end position="234"/>
    </location>
</feature>
<feature type="strand" evidence="17">
    <location>
        <begin position="241"/>
        <end position="244"/>
    </location>
</feature>
<feature type="strand" evidence="17">
    <location>
        <begin position="247"/>
        <end position="250"/>
    </location>
</feature>
<feature type="strand" evidence="17">
    <location>
        <begin position="257"/>
        <end position="259"/>
    </location>
</feature>
<feature type="helix" evidence="17">
    <location>
        <begin position="261"/>
        <end position="263"/>
    </location>
</feature>
<feature type="strand" evidence="17">
    <location>
        <begin position="266"/>
        <end position="273"/>
    </location>
</feature>
<feature type="helix" evidence="17">
    <location>
        <begin position="274"/>
        <end position="280"/>
    </location>
</feature>
<feature type="helix" evidence="17">
    <location>
        <begin position="283"/>
        <end position="293"/>
    </location>
</feature>
<feature type="helix" evidence="17">
    <location>
        <begin position="295"/>
        <end position="304"/>
    </location>
</feature>
<feature type="turn" evidence="17">
    <location>
        <begin position="305"/>
        <end position="308"/>
    </location>
</feature>
<feature type="strand" evidence="17">
    <location>
        <begin position="314"/>
        <end position="316"/>
    </location>
</feature>
<feature type="helix" evidence="17">
    <location>
        <begin position="329"/>
        <end position="335"/>
    </location>
</feature>
<feature type="turn" evidence="17">
    <location>
        <begin position="336"/>
        <end position="338"/>
    </location>
</feature>
<feature type="helix" evidence="17">
    <location>
        <begin position="346"/>
        <end position="357"/>
    </location>
</feature>
<feature type="turn" evidence="17">
    <location>
        <begin position="358"/>
        <end position="360"/>
    </location>
</feature>
<feature type="strand" evidence="17">
    <location>
        <begin position="361"/>
        <end position="363"/>
    </location>
</feature>
<feature type="strand" evidence="17">
    <location>
        <begin position="366"/>
        <end position="372"/>
    </location>
</feature>
<feature type="strand" evidence="17">
    <location>
        <begin position="378"/>
        <end position="381"/>
    </location>
</feature>
<feature type="strand" evidence="17">
    <location>
        <begin position="386"/>
        <end position="389"/>
    </location>
</feature>
<feature type="helix" evidence="17">
    <location>
        <begin position="393"/>
        <end position="408"/>
    </location>
</feature>
<feature type="strand" evidence="17">
    <location>
        <begin position="422"/>
        <end position="428"/>
    </location>
</feature>
<feature type="strand" evidence="18">
    <location>
        <begin position="431"/>
        <end position="433"/>
    </location>
</feature>
<feature type="turn" evidence="17">
    <location>
        <begin position="434"/>
        <end position="436"/>
    </location>
</feature>
<feature type="strand" evidence="17">
    <location>
        <begin position="440"/>
        <end position="448"/>
    </location>
</feature>
<feature type="strand" evidence="17">
    <location>
        <begin position="453"/>
        <end position="460"/>
    </location>
</feature>
<feature type="helix" evidence="18">
    <location>
        <begin position="463"/>
        <end position="465"/>
    </location>
</feature>
<feature type="strand" evidence="17">
    <location>
        <begin position="466"/>
        <end position="471"/>
    </location>
</feature>
<feature type="helix" evidence="17">
    <location>
        <begin position="475"/>
        <end position="487"/>
    </location>
</feature>
<dbReference type="EC" id="3.4.16.4" evidence="10"/>
<dbReference type="EMBL" id="AL123456">
    <property type="protein sequence ID" value="CCP42738.1"/>
    <property type="molecule type" value="Genomic_DNA"/>
</dbReference>
<dbReference type="PIR" id="F70699">
    <property type="entry name" value="F70699"/>
</dbReference>
<dbReference type="RefSeq" id="NP_214530.1">
    <property type="nucleotide sequence ID" value="NC_000962.3"/>
</dbReference>
<dbReference type="RefSeq" id="WP_003899775.1">
    <property type="nucleotide sequence ID" value="NZ_NVQJ01000005.1"/>
</dbReference>
<dbReference type="PDB" id="3LO7">
    <property type="method" value="X-ray"/>
    <property type="resolution" value="2.05 A"/>
    <property type="chains" value="A/B=35-491"/>
</dbReference>
<dbReference type="PDB" id="3UN7">
    <property type="method" value="X-ray"/>
    <property type="resolution" value="2.00 A"/>
    <property type="chains" value="A/B=35-491"/>
</dbReference>
<dbReference type="PDB" id="3UPN">
    <property type="method" value="X-ray"/>
    <property type="resolution" value="2.20 A"/>
    <property type="chains" value="A/B=35-491"/>
</dbReference>
<dbReference type="PDB" id="3UPO">
    <property type="method" value="X-ray"/>
    <property type="resolution" value="2.30 A"/>
    <property type="chains" value="A/B=35-491"/>
</dbReference>
<dbReference type="PDB" id="3UPP">
    <property type="method" value="X-ray"/>
    <property type="resolution" value="2.40 A"/>
    <property type="chains" value="A/B=35-491"/>
</dbReference>
<dbReference type="PDBsum" id="3LO7"/>
<dbReference type="PDBsum" id="3UN7"/>
<dbReference type="PDBsum" id="3UPN"/>
<dbReference type="PDBsum" id="3UPO"/>
<dbReference type="PDBsum" id="3UPP"/>
<dbReference type="SMR" id="P9WKD1"/>
<dbReference type="FunCoup" id="P9WKD1">
    <property type="interactions" value="5"/>
</dbReference>
<dbReference type="IntAct" id="P9WKD1">
    <property type="interactions" value="1"/>
</dbReference>
<dbReference type="STRING" id="83332.Rv0016c"/>
<dbReference type="PaxDb" id="83332-Rv0016c"/>
<dbReference type="DNASU" id="887078"/>
<dbReference type="GeneID" id="45423975"/>
<dbReference type="GeneID" id="887078"/>
<dbReference type="KEGG" id="mtu:Rv0016c"/>
<dbReference type="KEGG" id="mtv:RVBD_0016c"/>
<dbReference type="TubercuList" id="Rv0016c"/>
<dbReference type="eggNOG" id="COG0768">
    <property type="taxonomic scope" value="Bacteria"/>
</dbReference>
<dbReference type="InParanoid" id="P9WKD1"/>
<dbReference type="OrthoDB" id="9766847at2"/>
<dbReference type="PhylomeDB" id="P9WKD1"/>
<dbReference type="UniPathway" id="UPA00219"/>
<dbReference type="EvolutionaryTrace" id="P9WKD1"/>
<dbReference type="PHI-base" id="PHI:7983"/>
<dbReference type="Proteomes" id="UP000001584">
    <property type="component" value="Chromosome"/>
</dbReference>
<dbReference type="GO" id="GO:0005829">
    <property type="term" value="C:cytosol"/>
    <property type="evidence" value="ECO:0007005"/>
    <property type="project" value="MTBBASE"/>
</dbReference>
<dbReference type="GO" id="GO:0005886">
    <property type="term" value="C:plasma membrane"/>
    <property type="evidence" value="ECO:0000318"/>
    <property type="project" value="GO_Central"/>
</dbReference>
<dbReference type="GO" id="GO:0008658">
    <property type="term" value="F:penicillin binding"/>
    <property type="evidence" value="ECO:0000318"/>
    <property type="project" value="GO_Central"/>
</dbReference>
<dbReference type="GO" id="GO:0071972">
    <property type="term" value="F:peptidoglycan L,D-transpeptidase activity"/>
    <property type="evidence" value="ECO:0000318"/>
    <property type="project" value="GO_Central"/>
</dbReference>
<dbReference type="GO" id="GO:0009002">
    <property type="term" value="F:serine-type D-Ala-D-Ala carboxypeptidase activity"/>
    <property type="evidence" value="ECO:0007669"/>
    <property type="project" value="UniProtKB-EC"/>
</dbReference>
<dbReference type="GO" id="GO:0071555">
    <property type="term" value="P:cell wall organization"/>
    <property type="evidence" value="ECO:0000318"/>
    <property type="project" value="GO_Central"/>
</dbReference>
<dbReference type="GO" id="GO:0009252">
    <property type="term" value="P:peptidoglycan biosynthetic process"/>
    <property type="evidence" value="ECO:0007669"/>
    <property type="project" value="UniProtKB-UniPathway"/>
</dbReference>
<dbReference type="GO" id="GO:0008360">
    <property type="term" value="P:regulation of cell shape"/>
    <property type="evidence" value="ECO:0007669"/>
    <property type="project" value="UniProtKB-KW"/>
</dbReference>
<dbReference type="FunFam" id="3.40.710.10:FF:000022">
    <property type="entry name" value="Penicillin-binding protein A"/>
    <property type="match status" value="1"/>
</dbReference>
<dbReference type="Gene3D" id="3.40.710.10">
    <property type="entry name" value="DD-peptidase/beta-lactamase superfamily"/>
    <property type="match status" value="1"/>
</dbReference>
<dbReference type="Gene3D" id="3.90.1310.10">
    <property type="entry name" value="Penicillin-binding protein 2a (Domain 2)"/>
    <property type="match status" value="1"/>
</dbReference>
<dbReference type="InterPro" id="IPR050515">
    <property type="entry name" value="Bact_Transpept/Beta-Lactamase"/>
</dbReference>
<dbReference type="InterPro" id="IPR012338">
    <property type="entry name" value="Beta-lactam/transpept-like"/>
</dbReference>
<dbReference type="InterPro" id="IPR054120">
    <property type="entry name" value="PBPA_dimer"/>
</dbReference>
<dbReference type="InterPro" id="IPR001460">
    <property type="entry name" value="PCN-bd_Tpept"/>
</dbReference>
<dbReference type="PANTHER" id="PTHR30627:SF24">
    <property type="entry name" value="PENICILLIN-BINDING PROTEIN 4B"/>
    <property type="match status" value="1"/>
</dbReference>
<dbReference type="PANTHER" id="PTHR30627">
    <property type="entry name" value="PEPTIDOGLYCAN D,D-TRANSPEPTIDASE"/>
    <property type="match status" value="1"/>
</dbReference>
<dbReference type="Pfam" id="PF21922">
    <property type="entry name" value="PBP_dimer_2"/>
    <property type="match status" value="1"/>
</dbReference>
<dbReference type="Pfam" id="PF00905">
    <property type="entry name" value="Transpeptidase"/>
    <property type="match status" value="1"/>
</dbReference>
<dbReference type="SUPFAM" id="SSF56601">
    <property type="entry name" value="beta-lactamase/transpeptidase-like"/>
    <property type="match status" value="1"/>
</dbReference>
<comment type="function">
    <text evidence="5 10">Transpeptidase that catalyzes cross-linking of the peptidoglycan cell wall (Probable). Required for the regulation of cell length. Plays critical roles for the survival of the pathogen inside the host. Required for both bacterial survival and formation of granuloma structures in a guinea pig infection model (PubMed:29530985).</text>
</comment>
<comment type="catalytic activity">
    <reaction evidence="10">
        <text>Preferential cleavage: (Ac)2-L-Lys-D-Ala-|-D-Ala. Also transpeptidation of peptidyl-alanyl moieties that are N-acyl substituents of D-alanine.</text>
        <dbReference type="EC" id="3.4.16.4"/>
    </reaction>
</comment>
<comment type="activity regulation">
    <text evidence="4">Inhibited by the antibiotics imipenem, penicillin G, and ceftriaxone.</text>
</comment>
<comment type="pathway">
    <text evidence="10">Cell wall biogenesis; peptidoglycan biosynthesis.</text>
</comment>
<comment type="subcellular location">
    <subcellularLocation>
        <location evidence="7">Cell inner membrane</location>
        <topology evidence="2">Single-pass type II membrane protein</topology>
    </subcellularLocation>
</comment>
<comment type="domain">
    <text evidence="4">The apo form can adopt multiple conformations (PubMed:22365933). The beta5-alpha11 loop near the active site is a flexible region that can adopt a variety of conformations in the acylated state of PBPA and appears important for acylation (PubMed:22365933).</text>
</comment>
<comment type="disruption phenotype">
    <text evidence="5">Deletion of the gene does not impact in vitro growth, but it leads to aberrations in the cell length. Deletion mutant shows much higher sensitivity to oxacillin and clavulanic acid. Mutant shows compromised bacterial virulence in the host.</text>
</comment>
<comment type="similarity">
    <text evidence="7">Belongs to the transpeptidase family.</text>
</comment>
<comment type="caution">
    <text evidence="8 9">An article reported the phosphorylation of PbpA by PknB, but this paper was later retracted as some figures were modified prior to publication.</text>
</comment>
<proteinExistence type="evidence at protein level"/>
<reference key="1">
    <citation type="journal article" date="1998" name="Nature">
        <title>Deciphering the biology of Mycobacterium tuberculosis from the complete genome sequence.</title>
        <authorList>
            <person name="Cole S.T."/>
            <person name="Brosch R."/>
            <person name="Parkhill J."/>
            <person name="Garnier T."/>
            <person name="Churcher C.M."/>
            <person name="Harris D.E."/>
            <person name="Gordon S.V."/>
            <person name="Eiglmeier K."/>
            <person name="Gas S."/>
            <person name="Barry C.E. III"/>
            <person name="Tekaia F."/>
            <person name="Badcock K."/>
            <person name="Basham D."/>
            <person name="Brown D."/>
            <person name="Chillingworth T."/>
            <person name="Connor R."/>
            <person name="Davies R.M."/>
            <person name="Devlin K."/>
            <person name="Feltwell T."/>
            <person name="Gentles S."/>
            <person name="Hamlin N."/>
            <person name="Holroyd S."/>
            <person name="Hornsby T."/>
            <person name="Jagels K."/>
            <person name="Krogh A."/>
            <person name="McLean J."/>
            <person name="Moule S."/>
            <person name="Murphy L.D."/>
            <person name="Oliver S."/>
            <person name="Osborne J."/>
            <person name="Quail M.A."/>
            <person name="Rajandream M.A."/>
            <person name="Rogers J."/>
            <person name="Rutter S."/>
            <person name="Seeger K."/>
            <person name="Skelton S."/>
            <person name="Squares S."/>
            <person name="Squares R."/>
            <person name="Sulston J.E."/>
            <person name="Taylor K."/>
            <person name="Whitehead S."/>
            <person name="Barrell B.G."/>
        </authorList>
    </citation>
    <scope>NUCLEOTIDE SEQUENCE [LARGE SCALE GENOMIC DNA]</scope>
    <source>
        <strain>ATCC 25618 / H37Rv</strain>
    </source>
</reference>
<reference key="2">
    <citation type="journal article" date="2006" name="Microbiology">
        <title>The serine/threonine kinase PknB of Mycobacterium tuberculosis phosphorylates PBPA, a penicillin-binding protein required for cell division.</title>
        <authorList>
            <person name="Dasgupta A."/>
            <person name="Datta P."/>
            <person name="Kundu M."/>
            <person name="Basu J."/>
        </authorList>
    </citation>
    <scope>RETRACTED PAPER</scope>
    <source>
        <strain>ATCC 25618 / H37Rv</strain>
    </source>
</reference>
<reference key="3">
    <citation type="journal article" date="2015" name="Microbiology">
        <authorList>
            <person name="Dasgupta A."/>
            <person name="Datta P."/>
            <person name="Kundu M."/>
            <person name="Basu J."/>
        </authorList>
    </citation>
    <scope>RETRACTION NOTICE OF PUBMED:16436437</scope>
</reference>
<reference key="4">
    <citation type="journal article" date="2011" name="Mol. Cell. Proteomics">
        <title>Proteogenomic analysis of Mycobacterium tuberculosis by high resolution mass spectrometry.</title>
        <authorList>
            <person name="Kelkar D.S."/>
            <person name="Kumar D."/>
            <person name="Kumar P."/>
            <person name="Balakrishnan L."/>
            <person name="Muthusamy B."/>
            <person name="Yadav A.K."/>
            <person name="Shrivastava P."/>
            <person name="Marimuthu A."/>
            <person name="Anand S."/>
            <person name="Sundaram H."/>
            <person name="Kingsbury R."/>
            <person name="Harsha H.C."/>
            <person name="Nair B."/>
            <person name="Prasad T.S."/>
            <person name="Chauhan D.S."/>
            <person name="Katoch K."/>
            <person name="Katoch V.M."/>
            <person name="Kumar P."/>
            <person name="Chaerkady R."/>
            <person name="Ramachandran S."/>
            <person name="Dash D."/>
            <person name="Pandey A."/>
        </authorList>
    </citation>
    <scope>IDENTIFICATION BY MASS SPECTROMETRY [LARGE SCALE ANALYSIS]</scope>
    <source>
        <strain>ATCC 25618 / H37Rv</strain>
    </source>
</reference>
<reference key="5">
    <citation type="journal article" date="2018" name="J. Biol. Chem.">
        <title>The transpeptidase PbpA and noncanonical transglycosylase RodA of Mycobacterium tuberculosis play important roles in regulating bacterial cell lengths.</title>
        <authorList>
            <person name="Arora D."/>
            <person name="Chawla Y."/>
            <person name="Malakar B."/>
            <person name="Singh A."/>
            <person name="Nandicoori V.K."/>
        </authorList>
    </citation>
    <scope>FUNCTION</scope>
    <scope>CATALYTIC ACTIVITY</scope>
    <scope>PATHWAY</scope>
    <scope>DISRUPTION PHENOTYPE</scope>
    <scope>MUTAGENESIS OF SER-281 AND LYS-424</scope>
</reference>
<reference evidence="11" key="6">
    <citation type="journal article" date="2010" name="J. Mol. Biol.">
        <title>Unusual conformation of the SxN motif in the crystal structure of penicillin-binding protein A from Mycobacterium tuberculosis.</title>
        <authorList>
            <person name="Fedarovich A."/>
            <person name="Nicholas R.A."/>
            <person name="Davies C."/>
        </authorList>
    </citation>
    <scope>X-RAY CRYSTALLOGRAPHY (2.05 ANGSTROMS) OF 35-491</scope>
    <scope>DISULFIDE BOND</scope>
    <source>
        <strain>H37Rv</strain>
    </source>
</reference>
<reference evidence="12 13 14 15" key="7">
    <citation type="journal article" date="2012" name="J. Mol. Biol.">
        <title>The role of the beta5-alpha11 loop in the active-site dynamics of acylated penicillin-binding protein A from Mycobacterium tuberculosis.</title>
        <authorList>
            <person name="Fedarovich A."/>
            <person name="Nicholas R.A."/>
            <person name="Davies C."/>
        </authorList>
    </citation>
    <scope>X-RAY CRYSTALLOGRAPHY (2.00 ANGSTROMS) OF 35-491 OF APOENZYME AND IN COMPLEXES WITH ANTIBIOTICS</scope>
    <scope>ACTIVITY REGULATION</scope>
    <scope>DOMAIN</scope>
    <scope>DISULFIDE BOND</scope>
</reference>
<accession>P9WKD1</accession>
<accession>L0T427</accession>
<accession>P71586</accession>
<accession>Q7DAK5</accession>
<name>PBPA_MYCTU</name>